<dbReference type="EC" id="7.6.2.2"/>
<dbReference type="EMBL" id="AF008124">
    <property type="protein sequence ID" value="AAB67319.1"/>
    <property type="molecule type" value="mRNA"/>
</dbReference>
<dbReference type="EMBL" id="AF008125">
    <property type="protein sequence ID" value="AAB71832.1"/>
    <property type="molecule type" value="Genomic_DNA"/>
</dbReference>
<dbReference type="EMBL" id="AC025295">
    <property type="protein sequence ID" value="AAG51096.1"/>
    <property type="molecule type" value="Genomic_DNA"/>
</dbReference>
<dbReference type="EMBL" id="CP002684">
    <property type="protein sequence ID" value="AEE31212.1"/>
    <property type="molecule type" value="Genomic_DNA"/>
</dbReference>
<dbReference type="EMBL" id="CP002684">
    <property type="protein sequence ID" value="AEE31213.1"/>
    <property type="molecule type" value="Genomic_DNA"/>
</dbReference>
<dbReference type="EMBL" id="AY090258">
    <property type="protein sequence ID" value="AAL90919.1"/>
    <property type="status" value="ALT_INIT"/>
    <property type="molecule type" value="mRNA"/>
</dbReference>
<dbReference type="EMBL" id="U96398">
    <property type="protein sequence ID" value="AAC49796.1"/>
    <property type="molecule type" value="mRNA"/>
</dbReference>
<dbReference type="PIR" id="D86428">
    <property type="entry name" value="D86428"/>
</dbReference>
<dbReference type="RefSeq" id="NP_001031116.1">
    <property type="nucleotide sequence ID" value="NM_001036039.2"/>
</dbReference>
<dbReference type="RefSeq" id="NP_174329.1">
    <property type="nucleotide sequence ID" value="NM_102777.3"/>
</dbReference>
<dbReference type="SMR" id="Q9C8G9"/>
<dbReference type="BioGRID" id="25155">
    <property type="interactions" value="1"/>
</dbReference>
<dbReference type="FunCoup" id="Q9C8G9">
    <property type="interactions" value="2055"/>
</dbReference>
<dbReference type="IntAct" id="Q9C8G9">
    <property type="interactions" value="2"/>
</dbReference>
<dbReference type="STRING" id="3702.Q9C8G9"/>
<dbReference type="TCDB" id="3.A.1.208.20">
    <property type="family name" value="the atp-binding cassette (abc) superfamily"/>
</dbReference>
<dbReference type="iPTMnet" id="Q9C8G9"/>
<dbReference type="PaxDb" id="3702-AT1G30400.2"/>
<dbReference type="ProteomicsDB" id="245099"/>
<dbReference type="EnsemblPlants" id="AT1G30400.1">
    <property type="protein sequence ID" value="AT1G30400.1"/>
    <property type="gene ID" value="AT1G30400"/>
</dbReference>
<dbReference type="EnsemblPlants" id="AT1G30400.2">
    <property type="protein sequence ID" value="AT1G30400.2"/>
    <property type="gene ID" value="AT1G30400"/>
</dbReference>
<dbReference type="GeneID" id="839920"/>
<dbReference type="Gramene" id="AT1G30400.1">
    <property type="protein sequence ID" value="AT1G30400.1"/>
    <property type="gene ID" value="AT1G30400"/>
</dbReference>
<dbReference type="Gramene" id="AT1G30400.2">
    <property type="protein sequence ID" value="AT1G30400.2"/>
    <property type="gene ID" value="AT1G30400"/>
</dbReference>
<dbReference type="KEGG" id="ath:AT1G30400"/>
<dbReference type="Araport" id="AT1G30400"/>
<dbReference type="TAIR" id="AT1G30400">
    <property type="gene designation" value="ABCC1"/>
</dbReference>
<dbReference type="eggNOG" id="KOG0054">
    <property type="taxonomic scope" value="Eukaryota"/>
</dbReference>
<dbReference type="HOGENOM" id="CLU_000604_27_2_1"/>
<dbReference type="InParanoid" id="Q9C8G9"/>
<dbReference type="OMA" id="CFETGMR"/>
<dbReference type="OrthoDB" id="6500128at2759"/>
<dbReference type="PhylomeDB" id="Q9C8G9"/>
<dbReference type="BioCyc" id="ARA:AT1G30400-MONOMER"/>
<dbReference type="BioCyc" id="MetaCyc:AT1G30400-MONOMER"/>
<dbReference type="BRENDA" id="7.6.2.3">
    <property type="organism ID" value="399"/>
</dbReference>
<dbReference type="PRO" id="PR:Q9C8G9"/>
<dbReference type="Proteomes" id="UP000006548">
    <property type="component" value="Chromosome 1"/>
</dbReference>
<dbReference type="ExpressionAtlas" id="Q9C8G9">
    <property type="expression patterns" value="baseline and differential"/>
</dbReference>
<dbReference type="GO" id="GO:0000325">
    <property type="term" value="C:plant-type vacuole"/>
    <property type="evidence" value="ECO:0007005"/>
    <property type="project" value="TAIR"/>
</dbReference>
<dbReference type="GO" id="GO:0009506">
    <property type="term" value="C:plasmodesma"/>
    <property type="evidence" value="ECO:0007005"/>
    <property type="project" value="TAIR"/>
</dbReference>
<dbReference type="GO" id="GO:0005774">
    <property type="term" value="C:vacuolar membrane"/>
    <property type="evidence" value="ECO:0007005"/>
    <property type="project" value="TAIR"/>
</dbReference>
<dbReference type="GO" id="GO:0005773">
    <property type="term" value="C:vacuole"/>
    <property type="evidence" value="ECO:0007005"/>
    <property type="project" value="TAIR"/>
</dbReference>
<dbReference type="GO" id="GO:1902417">
    <property type="term" value="F:(+)-abscisic acid D-glucopyranosyl ester transmembrane transporter activity"/>
    <property type="evidence" value="ECO:0000314"/>
    <property type="project" value="TAIR"/>
</dbReference>
<dbReference type="GO" id="GO:0044604">
    <property type="term" value="F:ABC-type phytochelatin transporter activity"/>
    <property type="evidence" value="ECO:0000314"/>
    <property type="project" value="TAIR"/>
</dbReference>
<dbReference type="GO" id="GO:0008559">
    <property type="term" value="F:ABC-type xenobiotic transporter activity"/>
    <property type="evidence" value="ECO:0007669"/>
    <property type="project" value="UniProtKB-EC"/>
</dbReference>
<dbReference type="GO" id="GO:0005524">
    <property type="term" value="F:ATP binding"/>
    <property type="evidence" value="ECO:0007669"/>
    <property type="project" value="UniProtKB-KW"/>
</dbReference>
<dbReference type="GO" id="GO:0016887">
    <property type="term" value="F:ATP hydrolysis activity"/>
    <property type="evidence" value="ECO:0007669"/>
    <property type="project" value="InterPro"/>
</dbReference>
<dbReference type="GO" id="GO:0015446">
    <property type="term" value="F:ATPase-coupled arsenite transmembrane transporter activity"/>
    <property type="evidence" value="ECO:0000314"/>
    <property type="project" value="TAIR"/>
</dbReference>
<dbReference type="GO" id="GO:0042626">
    <property type="term" value="F:ATPase-coupled transmembrane transporter activity"/>
    <property type="evidence" value="ECO:0000250"/>
    <property type="project" value="TAIR"/>
</dbReference>
<dbReference type="GO" id="GO:0005516">
    <property type="term" value="F:calmodulin binding"/>
    <property type="evidence" value="ECO:0007669"/>
    <property type="project" value="UniProtKB-KW"/>
</dbReference>
<dbReference type="GO" id="GO:1902418">
    <property type="term" value="P:(+)-abscisic acid D-glucopyranosyl ester transmembrane transport"/>
    <property type="evidence" value="ECO:0000314"/>
    <property type="project" value="TAIR"/>
</dbReference>
<dbReference type="GO" id="GO:0015700">
    <property type="term" value="P:arsenite transport"/>
    <property type="evidence" value="ECO:0000314"/>
    <property type="project" value="TAIR"/>
</dbReference>
<dbReference type="GO" id="GO:0046685">
    <property type="term" value="P:response to arsenic-containing substance"/>
    <property type="evidence" value="ECO:0000315"/>
    <property type="project" value="TAIR"/>
</dbReference>
<dbReference type="CDD" id="cd18579">
    <property type="entry name" value="ABC_6TM_ABCC_D1"/>
    <property type="match status" value="1"/>
</dbReference>
<dbReference type="CDD" id="cd18580">
    <property type="entry name" value="ABC_6TM_ABCC_D2"/>
    <property type="match status" value="1"/>
</dbReference>
<dbReference type="CDD" id="cd03250">
    <property type="entry name" value="ABCC_MRP_domain1"/>
    <property type="match status" value="1"/>
</dbReference>
<dbReference type="CDD" id="cd03244">
    <property type="entry name" value="ABCC_MRP_domain2"/>
    <property type="match status" value="1"/>
</dbReference>
<dbReference type="FunFam" id="1.20.1560.10:FF:000013">
    <property type="entry name" value="ABC transporter C family member 2"/>
    <property type="match status" value="1"/>
</dbReference>
<dbReference type="FunFam" id="1.20.1560.10:FF:000024">
    <property type="entry name" value="ABC transporter C family member 2"/>
    <property type="match status" value="1"/>
</dbReference>
<dbReference type="FunFam" id="3.40.50.300:FF:000450">
    <property type="entry name" value="ABC transporter C family member 2"/>
    <property type="match status" value="1"/>
</dbReference>
<dbReference type="FunFam" id="3.40.50.300:FF:000163">
    <property type="entry name" value="Multidrug resistance-associated protein member 4"/>
    <property type="match status" value="1"/>
</dbReference>
<dbReference type="Gene3D" id="1.20.1560.10">
    <property type="entry name" value="ABC transporter type 1, transmembrane domain"/>
    <property type="match status" value="2"/>
</dbReference>
<dbReference type="Gene3D" id="3.40.50.300">
    <property type="entry name" value="P-loop containing nucleotide triphosphate hydrolases"/>
    <property type="match status" value="2"/>
</dbReference>
<dbReference type="InterPro" id="IPR003593">
    <property type="entry name" value="AAA+_ATPase"/>
</dbReference>
<dbReference type="InterPro" id="IPR011527">
    <property type="entry name" value="ABC1_TM_dom"/>
</dbReference>
<dbReference type="InterPro" id="IPR036640">
    <property type="entry name" value="ABC1_TM_sf"/>
</dbReference>
<dbReference type="InterPro" id="IPR003439">
    <property type="entry name" value="ABC_transporter-like_ATP-bd"/>
</dbReference>
<dbReference type="InterPro" id="IPR017871">
    <property type="entry name" value="ABC_transporter-like_CS"/>
</dbReference>
<dbReference type="InterPro" id="IPR050173">
    <property type="entry name" value="ABC_transporter_C-like"/>
</dbReference>
<dbReference type="InterPro" id="IPR044746">
    <property type="entry name" value="ABCC_6TM_D1"/>
</dbReference>
<dbReference type="InterPro" id="IPR044726">
    <property type="entry name" value="ABCC_6TM_D2"/>
</dbReference>
<dbReference type="InterPro" id="IPR027417">
    <property type="entry name" value="P-loop_NTPase"/>
</dbReference>
<dbReference type="PANTHER" id="PTHR24223:SF379">
    <property type="entry name" value="ABC TRANSPORTER C FAMILY MEMBER 1"/>
    <property type="match status" value="1"/>
</dbReference>
<dbReference type="PANTHER" id="PTHR24223">
    <property type="entry name" value="ATP-BINDING CASSETTE SUB-FAMILY C"/>
    <property type="match status" value="1"/>
</dbReference>
<dbReference type="Pfam" id="PF00664">
    <property type="entry name" value="ABC_membrane"/>
    <property type="match status" value="2"/>
</dbReference>
<dbReference type="Pfam" id="PF00005">
    <property type="entry name" value="ABC_tran"/>
    <property type="match status" value="2"/>
</dbReference>
<dbReference type="SMART" id="SM00382">
    <property type="entry name" value="AAA"/>
    <property type="match status" value="2"/>
</dbReference>
<dbReference type="SUPFAM" id="SSF90123">
    <property type="entry name" value="ABC transporter transmembrane region"/>
    <property type="match status" value="2"/>
</dbReference>
<dbReference type="SUPFAM" id="SSF52540">
    <property type="entry name" value="P-loop containing nucleoside triphosphate hydrolases"/>
    <property type="match status" value="2"/>
</dbReference>
<dbReference type="PROSITE" id="PS50929">
    <property type="entry name" value="ABC_TM1F"/>
    <property type="match status" value="2"/>
</dbReference>
<dbReference type="PROSITE" id="PS00211">
    <property type="entry name" value="ABC_TRANSPORTER_1"/>
    <property type="match status" value="2"/>
</dbReference>
<dbReference type="PROSITE" id="PS50893">
    <property type="entry name" value="ABC_TRANSPORTER_2"/>
    <property type="match status" value="2"/>
</dbReference>
<keyword id="KW-0067">ATP-binding</keyword>
<keyword id="KW-0112">Calmodulin-binding</keyword>
<keyword id="KW-0472">Membrane</keyword>
<keyword id="KW-0547">Nucleotide-binding</keyword>
<keyword id="KW-1185">Reference proteome</keyword>
<keyword id="KW-0677">Repeat</keyword>
<keyword id="KW-1278">Translocase</keyword>
<keyword id="KW-0812">Transmembrane</keyword>
<keyword id="KW-1133">Transmembrane helix</keyword>
<keyword id="KW-0813">Transport</keyword>
<keyword id="KW-0926">Vacuole</keyword>
<organism>
    <name type="scientific">Arabidopsis thaliana</name>
    <name type="common">Mouse-ear cress</name>
    <dbReference type="NCBI Taxonomy" id="3702"/>
    <lineage>
        <taxon>Eukaryota</taxon>
        <taxon>Viridiplantae</taxon>
        <taxon>Streptophyta</taxon>
        <taxon>Embryophyta</taxon>
        <taxon>Tracheophyta</taxon>
        <taxon>Spermatophyta</taxon>
        <taxon>Magnoliopsida</taxon>
        <taxon>eudicotyledons</taxon>
        <taxon>Gunneridae</taxon>
        <taxon>Pentapetalae</taxon>
        <taxon>rosids</taxon>
        <taxon>malvids</taxon>
        <taxon>Brassicales</taxon>
        <taxon>Brassicaceae</taxon>
        <taxon>Camelineae</taxon>
        <taxon>Arabidopsis</taxon>
    </lineage>
</organism>
<proteinExistence type="evidence at protein level"/>
<protein>
    <recommendedName>
        <fullName>ABC transporter C family member 1</fullName>
        <shortName>ABC transporter ABCC.1</shortName>
        <shortName>AtABCC1</shortName>
        <ecNumber>7.6.2.2</ecNumber>
    </recommendedName>
    <alternativeName>
        <fullName>ATP-energized glutathione S-conjugate pump 1</fullName>
    </alternativeName>
    <alternativeName>
        <fullName>Glutathione S-conjugate-transporting ATPase 1</fullName>
    </alternativeName>
    <alternativeName>
        <fullName>Multidrug resistance-associated protein 1</fullName>
    </alternativeName>
</protein>
<gene>
    <name type="primary">ABCC1</name>
    <name type="synonym">EST1</name>
    <name type="synonym">MRP1</name>
    <name type="ordered locus">At1g30400</name>
    <name type="ORF">T4K22.12</name>
</gene>
<feature type="chain" id="PRO_0000226072" description="ABC transporter C family member 1">
    <location>
        <begin position="1"/>
        <end position="1622"/>
    </location>
</feature>
<feature type="transmembrane region" description="Helical" evidence="2">
    <location>
        <begin position="37"/>
        <end position="57"/>
    </location>
</feature>
<feature type="transmembrane region" description="Helical" evidence="2">
    <location>
        <begin position="73"/>
        <end position="93"/>
    </location>
</feature>
<feature type="transmembrane region" description="Helical" evidence="2">
    <location>
        <begin position="110"/>
        <end position="130"/>
    </location>
</feature>
<feature type="transmembrane region" description="Helical" evidence="2">
    <location>
        <begin position="145"/>
        <end position="165"/>
    </location>
</feature>
<feature type="transmembrane region" description="Helical" evidence="2">
    <location>
        <begin position="174"/>
        <end position="194"/>
    </location>
</feature>
<feature type="transmembrane region" description="Helical" evidence="2">
    <location>
        <begin position="336"/>
        <end position="356"/>
    </location>
</feature>
<feature type="transmembrane region" description="Helical" evidence="2">
    <location>
        <begin position="440"/>
        <end position="460"/>
    </location>
</feature>
<feature type="transmembrane region" description="Helical" evidence="2">
    <location>
        <begin position="527"/>
        <end position="547"/>
    </location>
</feature>
<feature type="transmembrane region" description="Helical" evidence="2">
    <location>
        <begin position="557"/>
        <end position="577"/>
    </location>
</feature>
<feature type="transmembrane region" description="Helical" evidence="2">
    <location>
        <begin position="909"/>
        <end position="929"/>
    </location>
</feature>
<feature type="transmembrane region" description="Helical" evidence="2">
    <location>
        <begin position="951"/>
        <end position="971"/>
    </location>
</feature>
<feature type="transmembrane region" description="Helical" evidence="2">
    <location>
        <begin position="1027"/>
        <end position="1049"/>
    </location>
</feature>
<feature type="transmembrane region" description="Helical" evidence="2">
    <location>
        <begin position="1053"/>
        <end position="1072"/>
    </location>
</feature>
<feature type="transmembrane region" description="Helical" evidence="2">
    <location>
        <begin position="1138"/>
        <end position="1158"/>
    </location>
</feature>
<feature type="transmembrane region" description="Helical" evidence="2">
    <location>
        <begin position="1172"/>
        <end position="1192"/>
    </location>
</feature>
<feature type="domain" description="ABC transmembrane type-1 1" evidence="2">
    <location>
        <begin position="302"/>
        <end position="582"/>
    </location>
</feature>
<feature type="domain" description="ABC transporter 1" evidence="1">
    <location>
        <begin position="614"/>
        <end position="838"/>
    </location>
</feature>
<feature type="domain" description="ABC transmembrane type-1 2" evidence="2">
    <location>
        <begin position="916"/>
        <end position="1200"/>
    </location>
</feature>
<feature type="domain" description="ABC transporter 2" evidence="1">
    <location>
        <begin position="1237"/>
        <end position="1471"/>
    </location>
</feature>
<feature type="region of interest" description="Disordered" evidence="3">
    <location>
        <begin position="852"/>
        <end position="876"/>
    </location>
</feature>
<feature type="region of interest" description="Interaction with calmodulin and FKP42/TWD1">
    <location>
        <begin position="1231"/>
        <end position="1246"/>
    </location>
</feature>
<feature type="compositionally biased region" description="Polar residues" evidence="3">
    <location>
        <begin position="855"/>
        <end position="871"/>
    </location>
</feature>
<feature type="binding site" evidence="1">
    <location>
        <begin position="649"/>
        <end position="656"/>
    </location>
    <ligand>
        <name>ATP</name>
        <dbReference type="ChEBI" id="CHEBI:30616"/>
        <label>1</label>
    </ligand>
</feature>
<feature type="binding site" evidence="1">
    <location>
        <begin position="1271"/>
        <end position="1278"/>
    </location>
    <ligand>
        <name>ATP</name>
        <dbReference type="ChEBI" id="CHEBI:30616"/>
        <label>2</label>
    </ligand>
</feature>
<feature type="sequence conflict" description="In Ref. 1; AAB67319/AAB71832." evidence="10" ref="1">
    <original>D</original>
    <variation>E</variation>
    <location>
        <position position="765"/>
    </location>
</feature>
<feature type="sequence conflict" description="In Ref. 1; AAB67319/AAB71832." evidence="10" ref="1">
    <original>Q</original>
    <variation>P</variation>
    <location>
        <position position="833"/>
    </location>
</feature>
<feature type="sequence conflict" description="In Ref. 1; AAB67319/AAB71832." evidence="10" ref="1">
    <original>D</original>
    <variation>H</variation>
    <location>
        <position position="855"/>
    </location>
</feature>
<feature type="sequence conflict" description="In Ref. 1; AAB67319/AAB71832." evidence="10" ref="1">
    <original>S</original>
    <variation>I</variation>
    <location>
        <position position="934"/>
    </location>
</feature>
<feature type="sequence conflict" description="In Ref. 1; AAB67319/AAB71832." evidence="10" ref="1">
    <original>L</original>
    <variation>W</variation>
    <location>
        <position position="1152"/>
    </location>
</feature>
<feature type="sequence conflict" description="In Ref. 1; AAB67319/AAB71832." evidence="10" ref="1">
    <original>L</original>
    <variation>V</variation>
    <location>
        <position position="1314"/>
    </location>
</feature>
<accession>Q9C8G9</accession>
<accession>O24635</accession>
<accession>Q8RX76</accession>
<accession>Q9SAQ1</accession>
<evidence type="ECO:0000255" key="1">
    <source>
        <dbReference type="PROSITE-ProRule" id="PRU00434"/>
    </source>
</evidence>
<evidence type="ECO:0000255" key="2">
    <source>
        <dbReference type="PROSITE-ProRule" id="PRU00441"/>
    </source>
</evidence>
<evidence type="ECO:0000256" key="3">
    <source>
        <dbReference type="SAM" id="MobiDB-lite"/>
    </source>
</evidence>
<evidence type="ECO:0000269" key="4">
    <source>
    </source>
</evidence>
<evidence type="ECO:0000269" key="5">
    <source>
    </source>
</evidence>
<evidence type="ECO:0000269" key="6">
    <source>
    </source>
</evidence>
<evidence type="ECO:0000269" key="7">
    <source>
    </source>
</evidence>
<evidence type="ECO:0000269" key="8">
    <source>
    </source>
</evidence>
<evidence type="ECO:0000269" key="9">
    <source>
    </source>
</evidence>
<evidence type="ECO:0000305" key="10"/>
<name>AB1C_ARATH</name>
<reference key="1">
    <citation type="journal article" date="1997" name="Proc. Natl. Acad. Sci. U.S.A.">
        <title>AtMRP1 gene of Arabidopsis encodes a glutathione S-conjugate pump: isolation and functional definition of a plant ATP-binding cassette transporter gene.</title>
        <authorList>
            <person name="Lu Y.-P."/>
            <person name="Li Z.-S."/>
            <person name="Rea P.A."/>
        </authorList>
    </citation>
    <scope>NUCLEOTIDE SEQUENCE [GENOMIC DNA / MRNA]</scope>
    <scope>FUNCTION</scope>
    <scope>TISSUE SPECIFICITY</scope>
</reference>
<reference key="2">
    <citation type="journal article" date="2000" name="Nature">
        <title>Sequence and analysis of chromosome 1 of the plant Arabidopsis thaliana.</title>
        <authorList>
            <person name="Theologis A."/>
            <person name="Ecker J.R."/>
            <person name="Palm C.J."/>
            <person name="Federspiel N.A."/>
            <person name="Kaul S."/>
            <person name="White O."/>
            <person name="Alonso J."/>
            <person name="Altafi H."/>
            <person name="Araujo R."/>
            <person name="Bowman C.L."/>
            <person name="Brooks S.Y."/>
            <person name="Buehler E."/>
            <person name="Chan A."/>
            <person name="Chao Q."/>
            <person name="Chen H."/>
            <person name="Cheuk R.F."/>
            <person name="Chin C.W."/>
            <person name="Chung M.K."/>
            <person name="Conn L."/>
            <person name="Conway A.B."/>
            <person name="Conway A.R."/>
            <person name="Creasy T.H."/>
            <person name="Dewar K."/>
            <person name="Dunn P."/>
            <person name="Etgu P."/>
            <person name="Feldblyum T.V."/>
            <person name="Feng J.-D."/>
            <person name="Fong B."/>
            <person name="Fujii C.Y."/>
            <person name="Gill J.E."/>
            <person name="Goldsmith A.D."/>
            <person name="Haas B."/>
            <person name="Hansen N.F."/>
            <person name="Hughes B."/>
            <person name="Huizar L."/>
            <person name="Hunter J.L."/>
            <person name="Jenkins J."/>
            <person name="Johnson-Hopson C."/>
            <person name="Khan S."/>
            <person name="Khaykin E."/>
            <person name="Kim C.J."/>
            <person name="Koo H.L."/>
            <person name="Kremenetskaia I."/>
            <person name="Kurtz D.B."/>
            <person name="Kwan A."/>
            <person name="Lam B."/>
            <person name="Langin-Hooper S."/>
            <person name="Lee A."/>
            <person name="Lee J.M."/>
            <person name="Lenz C.A."/>
            <person name="Li J.H."/>
            <person name="Li Y.-P."/>
            <person name="Lin X."/>
            <person name="Liu S.X."/>
            <person name="Liu Z.A."/>
            <person name="Luros J.S."/>
            <person name="Maiti R."/>
            <person name="Marziali A."/>
            <person name="Militscher J."/>
            <person name="Miranda M."/>
            <person name="Nguyen M."/>
            <person name="Nierman W.C."/>
            <person name="Osborne B.I."/>
            <person name="Pai G."/>
            <person name="Peterson J."/>
            <person name="Pham P.K."/>
            <person name="Rizzo M."/>
            <person name="Rooney T."/>
            <person name="Rowley D."/>
            <person name="Sakano H."/>
            <person name="Salzberg S.L."/>
            <person name="Schwartz J.R."/>
            <person name="Shinn P."/>
            <person name="Southwick A.M."/>
            <person name="Sun H."/>
            <person name="Tallon L.J."/>
            <person name="Tambunga G."/>
            <person name="Toriumi M.J."/>
            <person name="Town C.D."/>
            <person name="Utterback T."/>
            <person name="Van Aken S."/>
            <person name="Vaysberg M."/>
            <person name="Vysotskaia V.S."/>
            <person name="Walker M."/>
            <person name="Wu D."/>
            <person name="Yu G."/>
            <person name="Fraser C.M."/>
            <person name="Venter J.C."/>
            <person name="Davis R.W."/>
        </authorList>
    </citation>
    <scope>NUCLEOTIDE SEQUENCE [LARGE SCALE GENOMIC DNA]</scope>
    <source>
        <strain>cv. Columbia</strain>
    </source>
</reference>
<reference key="3">
    <citation type="journal article" date="2017" name="Plant J.">
        <title>Araport11: a complete reannotation of the Arabidopsis thaliana reference genome.</title>
        <authorList>
            <person name="Cheng C.Y."/>
            <person name="Krishnakumar V."/>
            <person name="Chan A.P."/>
            <person name="Thibaud-Nissen F."/>
            <person name="Schobel S."/>
            <person name="Town C.D."/>
        </authorList>
    </citation>
    <scope>GENOME REANNOTATION</scope>
    <source>
        <strain>cv. Columbia</strain>
    </source>
</reference>
<reference key="4">
    <citation type="journal article" date="2003" name="Science">
        <title>Empirical analysis of transcriptional activity in the Arabidopsis genome.</title>
        <authorList>
            <person name="Yamada K."/>
            <person name="Lim J."/>
            <person name="Dale J.M."/>
            <person name="Chen H."/>
            <person name="Shinn P."/>
            <person name="Palm C.J."/>
            <person name="Southwick A.M."/>
            <person name="Wu H.C."/>
            <person name="Kim C.J."/>
            <person name="Nguyen M."/>
            <person name="Pham P.K."/>
            <person name="Cheuk R.F."/>
            <person name="Karlin-Newmann G."/>
            <person name="Liu S.X."/>
            <person name="Lam B."/>
            <person name="Sakano H."/>
            <person name="Wu T."/>
            <person name="Yu G."/>
            <person name="Miranda M."/>
            <person name="Quach H.L."/>
            <person name="Tripp M."/>
            <person name="Chang C.H."/>
            <person name="Lee J.M."/>
            <person name="Toriumi M.J."/>
            <person name="Chan M.M."/>
            <person name="Tang C.C."/>
            <person name="Onodera C.S."/>
            <person name="Deng J.M."/>
            <person name="Akiyama K."/>
            <person name="Ansari Y."/>
            <person name="Arakawa T."/>
            <person name="Banh J."/>
            <person name="Banno F."/>
            <person name="Bowser L."/>
            <person name="Brooks S.Y."/>
            <person name="Carninci P."/>
            <person name="Chao Q."/>
            <person name="Choy N."/>
            <person name="Enju A."/>
            <person name="Goldsmith A.D."/>
            <person name="Gurjal M."/>
            <person name="Hansen N.F."/>
            <person name="Hayashizaki Y."/>
            <person name="Johnson-Hopson C."/>
            <person name="Hsuan V.W."/>
            <person name="Iida K."/>
            <person name="Karnes M."/>
            <person name="Khan S."/>
            <person name="Koesema E."/>
            <person name="Ishida J."/>
            <person name="Jiang P.X."/>
            <person name="Jones T."/>
            <person name="Kawai J."/>
            <person name="Kamiya A."/>
            <person name="Meyers C."/>
            <person name="Nakajima M."/>
            <person name="Narusaka M."/>
            <person name="Seki M."/>
            <person name="Sakurai T."/>
            <person name="Satou M."/>
            <person name="Tamse R."/>
            <person name="Vaysberg M."/>
            <person name="Wallender E.K."/>
            <person name="Wong C."/>
            <person name="Yamamura Y."/>
            <person name="Yuan S."/>
            <person name="Shinozaki K."/>
            <person name="Davis R.W."/>
            <person name="Theologis A."/>
            <person name="Ecker J.R."/>
        </authorList>
    </citation>
    <scope>NUCLEOTIDE SEQUENCE [LARGE SCALE MRNA] OF 820-1622</scope>
    <source>
        <strain>cv. Columbia</strain>
    </source>
</reference>
<reference key="5">
    <citation type="journal article" date="1997" name="FEBS Lett.">
        <title>Differential expression of genes coding for ABC transporters after treatment of Arabidopsis thaliana with xenobiotics.</title>
        <authorList>
            <person name="Tommasini R."/>
            <person name="Vogt E."/>
            <person name="Schmid J."/>
            <person name="Fromentau M."/>
            <person name="Amrhein N."/>
            <person name="Martinoia E."/>
        </authorList>
    </citation>
    <scope>NUCLEOTIDE SEQUENCE [MRNA] OF 1390-1486</scope>
</reference>
<reference key="6">
    <citation type="journal article" date="1998" name="Mol. Gen. Genet.">
        <title>Cloning and expression analyses of the AtMRP4, a novel MRP-like gene from Arabidopsis thaliana.</title>
        <authorList>
            <person name="Sanchez-Fernandez R."/>
            <person name="Ardiles-Diaz W."/>
            <person name="Van Montagu M."/>
            <person name="Inze D."/>
            <person name="May M.J."/>
        </authorList>
    </citation>
    <scope>INDUCTION</scope>
</reference>
<reference key="7">
    <citation type="journal article" date="1998" name="Plant Cell">
        <title>AtMRP2, an Arabidopsis ATP-binding cassette transporter able to transport glutathione S-conjugates and chlorophyll catabolites: functional comparisons with AtMRP1.</title>
        <authorList>
            <person name="Lu Y.-P."/>
            <person name="Li Z.-S."/>
            <person name="Drozdowicz Y.M."/>
            <person name="Hoertensteiner S."/>
            <person name="Martinoia E."/>
            <person name="Rea P.A."/>
        </authorList>
    </citation>
    <scope>TISSUE SPECIFICITY</scope>
    <scope>BIOPHYSICOCHEMICAL PROPERTIES</scope>
</reference>
<reference key="8">
    <citation type="journal article" date="2001" name="J. Biol. Chem.">
        <title>The Arabidopsis thaliana ABC protein superfamily, a complete inventory.</title>
        <authorList>
            <person name="Sanchez-Fernandez R."/>
            <person name="Davies T.G."/>
            <person name="Coleman J.O."/>
            <person name="Rea P.A."/>
        </authorList>
    </citation>
    <scope>GENE FAMILY</scope>
    <scope>NOMENCLATURE</scope>
</reference>
<reference key="9">
    <citation type="journal article" date="2002" name="Planta">
        <title>Multifunctionality of plant ABC transporters -- more than just detoxifiers.</title>
        <authorList>
            <person name="Martinoia E."/>
            <person name="Klein M."/>
            <person name="Geisler M."/>
            <person name="Bovet L."/>
            <person name="Forestier C."/>
            <person name="Kolukisaoglu H.U."/>
            <person name="Mueller-Roeber B."/>
            <person name="Schulz B."/>
        </authorList>
    </citation>
    <scope>GENE FAMILY</scope>
</reference>
<reference key="10">
    <citation type="journal article" date="2002" name="Planta">
        <title>Family business: the multidrug-resistance related protein (MRP) ABC transporter genes in Arabidopsis thaliana.</title>
        <authorList>
            <person name="Kolukisaoglu U.H."/>
            <person name="Bovet L."/>
            <person name="Klein M."/>
            <person name="Eggmann T."/>
            <person name="Geisler M."/>
            <person name="Wanke D."/>
            <person name="Martinoia E."/>
            <person name="Schulz B."/>
        </authorList>
    </citation>
    <scope>TISSUE SPECIFICITY</scope>
</reference>
<reference key="11">
    <citation type="journal article" date="2004" name="Mol. Biol. Cell">
        <title>Arabidopsis immunophilin-like TWD1 functionally interacts with vacuolar ABC transporters.</title>
        <authorList>
            <person name="Geisler M."/>
            <person name="Girin M."/>
            <person name="Brandt S."/>
            <person name="Vincenzetti V."/>
            <person name="Plaza S."/>
            <person name="Paris N."/>
            <person name="Kobae Y."/>
            <person name="Maeshima M."/>
            <person name="Billion K."/>
            <person name="Kolukisaoglu U.H."/>
            <person name="Schulz B."/>
            <person name="Martinoia E."/>
        </authorList>
    </citation>
    <scope>SUBCELLULAR LOCATION</scope>
    <scope>TISSUE SPECIFICITY</scope>
    <scope>INTERACTION WITH PAS1; CALMODULIN AND FKBP42/TWD1</scope>
</reference>
<reference key="12">
    <citation type="journal article" date="2007" name="Mol. Cell. Proteomics">
        <title>A proteomics dissection of Arabidopsis thaliana vacuoles isolated from cell culture.</title>
        <authorList>
            <person name="Jaquinod M."/>
            <person name="Villiers F."/>
            <person name="Kieffer-Jaquinod S."/>
            <person name="Hugouvieux V."/>
            <person name="Bruley C."/>
            <person name="Garin J."/>
            <person name="Bourguignon J."/>
        </authorList>
    </citation>
    <scope>IDENTIFICATION BY MASS SPECTROMETRY</scope>
    <scope>SUBCELLULAR LOCATION [LARGE SCALE ANALYSIS]</scope>
</reference>
<reference key="13">
    <citation type="journal article" date="2008" name="Trends Plant Sci.">
        <title>Plant ABC proteins - a unified nomenclature and updated inventory.</title>
        <authorList>
            <person name="Verrier P.J."/>
            <person name="Bird D."/>
            <person name="Burla B."/>
            <person name="Dassa E."/>
            <person name="Forestier C."/>
            <person name="Geisler M."/>
            <person name="Klein M."/>
            <person name="Kolukisaoglu H.U."/>
            <person name="Lee Y."/>
            <person name="Martinoia E."/>
            <person name="Murphy A."/>
            <person name="Rea P.A."/>
            <person name="Samuels L."/>
            <person name="Schulz B."/>
            <person name="Spalding E.J."/>
            <person name="Yazaki K."/>
            <person name="Theodoulou F.L."/>
        </authorList>
    </citation>
    <scope>GENE FAMILY</scope>
    <scope>NOMENCLATURE</scope>
</reference>
<sequence length="1622" mass="181927">MGFEPLDWYCKPVPNGVWTKTVDYAFGAYTPCAIDSFVLGISHLVLLILCLYRLWLITKDHKVDKFCLRSKWFSYFLALLAAYATAEPLFRLVMRISVLDLDGAGFPPYEAFMLVLEAFAWGSALVMTVVETKTYIHELRWYVRFAVIYALVGDMVLLNLVLSVKEYYGSFKLYLYISEVAVQVAFGTLLFVYFPNLDPYPGYTPVGTENSEDYEYEELPGGENICPERHANLFDSIFFSWLNPLMTLGSKRPLTEKDVWHLDTWDKTETLMRSFQKSWDKELEKPKPWLLRALNNSLGGRFWWGGFWKIGNDCSQFVGPLLLNELLKSMQLNEPAWIGYIYAISIFVGVVLGVLCEAQYFQNVMRVGYRLRSALIAAVFRKSLRLTNEGRKKFQTGKITNLMTTDAESLQQICQSLHTMWSAPFRIIVALVLLYQQLGVASIIGALFLVLMFPIQTVIISKTQKLTKEGLQRTDKRIGLMNEVLAAMDTVKCYAWENSFQSKVQTVRDDELSWFRKAQLLSAFNMFILNSIPVLVTVVSFGVFSLLGGDLTPARAFTSLSLFSVLRFPLFMLPNIITQMVNANVSLNRLEEVLSTEERVLLPNPPIEPGQPAISIRNGYFSWDSKADRPTLSNINLDIPLGSLVAVVGSTGEGKTSLISAMLGELPARSDATVTLRGSVAYVPQVSWIFNATVRDNILFGAPFDQEKYERVIDVTALQHDLELLPGGDLTEIGERGVNISGGQKQRVSMARAVYSNSDVCILDDPLSALDAHVGQQVFEKCIKRELGQTTRVLVTNQLHFLSQVDKILLVHEGTVKEEGTYEELCHSGPLFQRLMENAGKVEDYSEENGEAEVDQTSVKPVENGNANNLQKDGIETKNSKEGNSVLVKREERETGVVSWKVLERYQNALGGAWVVMMLVICYVLTQVFRVSSSTWLSEWTDSGTPKTHGPLFYNIVYALLSFGQVSVTLINSYWLIMSSLYAAKKMHDAMLGSILRAPMVFFQTNPLGRIINRFAKDMGDIDRTVAVFVNMFMGSIAQLLSTVILIGIVSTLSLWAIMPLLVVFYGAYLYYQNTSREIKRMDSTTRSPVYAQFGEALNGLSSIRAYKAYDRMAEINGRSMDNNIRFTLVNMAANRWLGIRLEVLGGLMVWLTASLAVMQNGKAANQQAYASTMGLLLSYALSITSSLTAVLRLASLAENSLNSVERVGNYIEIPSEAPLVIENNRPPPGWPSSGSIKFEDVVLRYRPELPPVLHGVSFLISPMDKVGIVGRTGAGKSSLLNALFRIVELEKGRILIDECDIGRFGLMDLRKVLGIIPQAPVLFSGTVRFNLDPFSEHNDADLWESLERAHLKDTIRRNPLGLDAEVTEAGENFSVGQRQLLSLARALLRRSKILVLDEATAAVDVRTDVLIQKTIREEFKSCTMLIIAHRLNTIIDCDKVLVLDSGKVQEFSSPENLLSNGESSFSKMVQSTGTANAEYLRSITLENKRTREANGDDSQPLEGQRKWQASSRWAAAAQFALAVSLTSSHNDLQSLEIEDDNSILKKTKDAVVTLRSVLEGKHDKEIEDSLNQSDISRERWWPSLYKMVEGLAVMSRLARNRMQHPDYNLEGKSFDWDNVEM</sequence>
<comment type="function">
    <text evidence="7">Pump for glutathione S-conjugates. Mediates the transport of S-(2,4-dinitrophenyl)-glutathione (DNP-GS), GSSG, cyanidin 3-glucoside-GS (C3G-GS) and metolachlor-GS (MOC-GS).</text>
</comment>
<comment type="catalytic activity">
    <reaction>
        <text>ATP + H2O + xenobioticSide 1 = ADP + phosphate + xenobioticSide 2.</text>
        <dbReference type="EC" id="7.6.2.2"/>
    </reaction>
</comment>
<comment type="biophysicochemical properties">
    <kinetics>
        <KM evidence="8">70 uM for DNP-GS (at pH 8)</KM>
        <KM evidence="8">220 uM for GSSG (at pH 8)</KM>
        <KM evidence="8">60 uM for MOC-GS (at pH 8)</KM>
        <Vmax evidence="8">0.82 nmol/min/mg enzyme with DNP-GS as substrate (at pH 8)</Vmax>
        <Vmax evidence="8">0.68 nmol/min/mg enzyme with GSSG as substrate (at pH 8)</Vmax>
        <Vmax evidence="8">1.75 nmol/min/mg enzyme with MOC-GS as substrate (at pH 8)</Vmax>
        <Vmax evidence="8">0.79 nmol/min/mg enzyme with C3G-GS as substrate (at pH 8)</Vmax>
    </kinetics>
</comment>
<comment type="subunit">
    <text evidence="5">Interacts with calmodulin (CaM), PAS1 and FKBP42/TWD1.</text>
</comment>
<comment type="interaction">
    <interactant intactId="EBI-637633">
        <id>Q9C8G9</id>
    </interactant>
    <interactant intactId="EBI-360006">
        <id>Q9LDC0</id>
        <label>FKBP42</label>
    </interactant>
    <organismsDiffer>false</organismsDiffer>
    <experiments>4</experiments>
</comment>
<comment type="subcellular location">
    <subcellularLocation>
        <location evidence="5 6">Vacuole membrane</location>
        <topology evidence="2 5">Multi-pass membrane protein</topology>
    </subcellularLocation>
    <text>Tonoplast.</text>
</comment>
<comment type="tissue specificity">
    <text evidence="4 5 7 8">Ubiquitous, with higher levels in leaves and stems and lower levels in roots. Localized in the root apex, root hair tips and root epidermis.</text>
</comment>
<comment type="induction">
    <text evidence="9">Slightly induced by benoxacor, cloquintocet, fenchlorazol and fluorazol.</text>
</comment>
<comment type="similarity">
    <text evidence="10">Belongs to the ABC transporter superfamily. ABCC family. Conjugate transporter (TC 3.A.1.208) subfamily.</text>
</comment>
<comment type="sequence caution" evidence="10">
    <conflict type="erroneous initiation">
        <sequence resource="EMBL-CDS" id="AAL90919"/>
    </conflict>
</comment>